<reference key="1">
    <citation type="submission" date="2007-10" db="EMBL/GenBank/DDBJ databases">
        <title>Complete sequence of chromosome of Desulforudis audaxviator MP104C.</title>
        <authorList>
            <person name="Copeland A."/>
            <person name="Lucas S."/>
            <person name="Lapidus A."/>
            <person name="Barry K."/>
            <person name="Glavina del Rio T."/>
            <person name="Dalin E."/>
            <person name="Tice H."/>
            <person name="Bruce D."/>
            <person name="Pitluck S."/>
            <person name="Lowry S.R."/>
            <person name="Larimer F."/>
            <person name="Land M.L."/>
            <person name="Hauser L."/>
            <person name="Kyrpides N."/>
            <person name="Ivanova N.N."/>
            <person name="Richardson P."/>
        </authorList>
    </citation>
    <scope>NUCLEOTIDE SEQUENCE [LARGE SCALE GENOMIC DNA]</scope>
    <source>
        <strain>MP104C</strain>
    </source>
</reference>
<organism>
    <name type="scientific">Desulforudis audaxviator (strain MP104C)</name>
    <dbReference type="NCBI Taxonomy" id="477974"/>
    <lineage>
        <taxon>Bacteria</taxon>
        <taxon>Bacillati</taxon>
        <taxon>Bacillota</taxon>
        <taxon>Clostridia</taxon>
        <taxon>Thermoanaerobacterales</taxon>
        <taxon>Candidatus Desulforudaceae</taxon>
        <taxon>Candidatus Desulforudis</taxon>
    </lineage>
</organism>
<gene>
    <name evidence="2" type="primary">rpsL</name>
    <name type="ordered locus">Daud_0220</name>
</gene>
<feature type="chain" id="PRO_1000194155" description="Small ribosomal subunit protein uS12">
    <location>
        <begin position="1"/>
        <end position="124"/>
    </location>
</feature>
<feature type="region of interest" description="Disordered" evidence="3">
    <location>
        <begin position="103"/>
        <end position="124"/>
    </location>
</feature>
<feature type="compositionally biased region" description="Basic residues" evidence="3">
    <location>
        <begin position="111"/>
        <end position="124"/>
    </location>
</feature>
<feature type="modified residue" description="3-methylthioaspartic acid" evidence="1">
    <location>
        <position position="89"/>
    </location>
</feature>
<dbReference type="EMBL" id="CP000860">
    <property type="protein sequence ID" value="ACA58781.1"/>
    <property type="molecule type" value="Genomic_DNA"/>
</dbReference>
<dbReference type="RefSeq" id="WP_012301373.1">
    <property type="nucleotide sequence ID" value="NC_010424.1"/>
</dbReference>
<dbReference type="SMR" id="B1I1I3"/>
<dbReference type="STRING" id="477974.Daud_0220"/>
<dbReference type="KEGG" id="dau:Daud_0220"/>
<dbReference type="eggNOG" id="COG0048">
    <property type="taxonomic scope" value="Bacteria"/>
</dbReference>
<dbReference type="HOGENOM" id="CLU_104295_1_2_9"/>
<dbReference type="OrthoDB" id="9802366at2"/>
<dbReference type="Proteomes" id="UP000008544">
    <property type="component" value="Chromosome"/>
</dbReference>
<dbReference type="GO" id="GO:0015935">
    <property type="term" value="C:small ribosomal subunit"/>
    <property type="evidence" value="ECO:0007669"/>
    <property type="project" value="InterPro"/>
</dbReference>
<dbReference type="GO" id="GO:0019843">
    <property type="term" value="F:rRNA binding"/>
    <property type="evidence" value="ECO:0007669"/>
    <property type="project" value="UniProtKB-UniRule"/>
</dbReference>
<dbReference type="GO" id="GO:0003735">
    <property type="term" value="F:structural constituent of ribosome"/>
    <property type="evidence" value="ECO:0007669"/>
    <property type="project" value="InterPro"/>
</dbReference>
<dbReference type="GO" id="GO:0000049">
    <property type="term" value="F:tRNA binding"/>
    <property type="evidence" value="ECO:0007669"/>
    <property type="project" value="UniProtKB-UniRule"/>
</dbReference>
<dbReference type="GO" id="GO:0006412">
    <property type="term" value="P:translation"/>
    <property type="evidence" value="ECO:0007669"/>
    <property type="project" value="UniProtKB-UniRule"/>
</dbReference>
<dbReference type="CDD" id="cd03368">
    <property type="entry name" value="Ribosomal_S12"/>
    <property type="match status" value="1"/>
</dbReference>
<dbReference type="FunFam" id="2.40.50.140:FF:000001">
    <property type="entry name" value="30S ribosomal protein S12"/>
    <property type="match status" value="1"/>
</dbReference>
<dbReference type="Gene3D" id="2.40.50.140">
    <property type="entry name" value="Nucleic acid-binding proteins"/>
    <property type="match status" value="1"/>
</dbReference>
<dbReference type="HAMAP" id="MF_00403_B">
    <property type="entry name" value="Ribosomal_uS12_B"/>
    <property type="match status" value="1"/>
</dbReference>
<dbReference type="InterPro" id="IPR012340">
    <property type="entry name" value="NA-bd_OB-fold"/>
</dbReference>
<dbReference type="InterPro" id="IPR006032">
    <property type="entry name" value="Ribosomal_uS12"/>
</dbReference>
<dbReference type="InterPro" id="IPR005679">
    <property type="entry name" value="Ribosomal_uS12_bac"/>
</dbReference>
<dbReference type="NCBIfam" id="TIGR00981">
    <property type="entry name" value="rpsL_bact"/>
    <property type="match status" value="1"/>
</dbReference>
<dbReference type="PANTHER" id="PTHR11652">
    <property type="entry name" value="30S RIBOSOMAL PROTEIN S12 FAMILY MEMBER"/>
    <property type="match status" value="1"/>
</dbReference>
<dbReference type="Pfam" id="PF00164">
    <property type="entry name" value="Ribosom_S12_S23"/>
    <property type="match status" value="1"/>
</dbReference>
<dbReference type="PIRSF" id="PIRSF002133">
    <property type="entry name" value="Ribosomal_S12/S23"/>
    <property type="match status" value="1"/>
</dbReference>
<dbReference type="PRINTS" id="PR01034">
    <property type="entry name" value="RIBOSOMALS12"/>
</dbReference>
<dbReference type="SUPFAM" id="SSF50249">
    <property type="entry name" value="Nucleic acid-binding proteins"/>
    <property type="match status" value="1"/>
</dbReference>
<dbReference type="PROSITE" id="PS00055">
    <property type="entry name" value="RIBOSOMAL_S12"/>
    <property type="match status" value="1"/>
</dbReference>
<name>RS12_DESAP</name>
<sequence>MPTISQLIRRGRETVAQKSASPALRECPQKRGVCTRVYTTTPKKPNSALRKVARVRLTNGYEVTTYIPGIGHNLQEHSVVLVRGGRVKDLPGVRYHIVRGALDTAGVQNRNRGRSKYGAKRPKK</sequence>
<comment type="function">
    <text evidence="2">With S4 and S5 plays an important role in translational accuracy.</text>
</comment>
<comment type="function">
    <text evidence="2">Interacts with and stabilizes bases of the 16S rRNA that are involved in tRNA selection in the A site and with the mRNA backbone. Located at the interface of the 30S and 50S subunits, it traverses the body of the 30S subunit contacting proteins on the other side and probably holding the rRNA structure together. The combined cluster of proteins S8, S12 and S17 appears to hold together the shoulder and platform of the 30S subunit.</text>
</comment>
<comment type="subunit">
    <text evidence="2">Part of the 30S ribosomal subunit. Contacts proteins S8 and S17. May interact with IF1 in the 30S initiation complex.</text>
</comment>
<comment type="similarity">
    <text evidence="2">Belongs to the universal ribosomal protein uS12 family.</text>
</comment>
<protein>
    <recommendedName>
        <fullName evidence="2">Small ribosomal subunit protein uS12</fullName>
    </recommendedName>
    <alternativeName>
        <fullName evidence="4">30S ribosomal protein S12</fullName>
    </alternativeName>
</protein>
<keyword id="KW-0488">Methylation</keyword>
<keyword id="KW-1185">Reference proteome</keyword>
<keyword id="KW-0687">Ribonucleoprotein</keyword>
<keyword id="KW-0689">Ribosomal protein</keyword>
<keyword id="KW-0694">RNA-binding</keyword>
<keyword id="KW-0699">rRNA-binding</keyword>
<keyword id="KW-0820">tRNA-binding</keyword>
<evidence type="ECO:0000250" key="1"/>
<evidence type="ECO:0000255" key="2">
    <source>
        <dbReference type="HAMAP-Rule" id="MF_00403"/>
    </source>
</evidence>
<evidence type="ECO:0000256" key="3">
    <source>
        <dbReference type="SAM" id="MobiDB-lite"/>
    </source>
</evidence>
<evidence type="ECO:0000305" key="4"/>
<accession>B1I1I3</accession>
<proteinExistence type="inferred from homology"/>